<name>RECF_CHLTE</name>
<proteinExistence type="inferred from homology"/>
<sequence length="368" mass="42117">MRLDSISIANFRNHTLLEFEPGHSITNIYGRNGSGKTSILEAIHYCALTRGFSGNNDREYLKFGEELFTIRSSFTSGQGIATKVSITYSPKREKRILVNEQELQTFSSHIGTIPCVTFTPREMVIINGAPAERRRFIDTAICQYDRKYLSDLLLYRRILQQRNALLSSEQDPRVIDSALDVLTDQLVAIATEIVLVRKRFIEHFTSMLGGVYQWIPEGAEPSILYQSSLGHHENLYEKDKIQQVFRERFETLKQQELQRRQTLAGPHRDDLQFYLNKREIRKYASQGQQRAFLVAMKMTLQGYLYEASGEIPITLLDDLFSELDEVVSGTMVETLATKGQVIITSTEKKKGKGISFFSVDDYKSSKEP</sequence>
<dbReference type="EMBL" id="AE006470">
    <property type="protein sequence ID" value="AAM73500.1"/>
    <property type="molecule type" value="Genomic_DNA"/>
</dbReference>
<dbReference type="RefSeq" id="NP_663158.1">
    <property type="nucleotide sequence ID" value="NC_002932.3"/>
</dbReference>
<dbReference type="RefSeq" id="WP_010933935.1">
    <property type="nucleotide sequence ID" value="NC_002932.3"/>
</dbReference>
<dbReference type="SMR" id="Q8KA81"/>
<dbReference type="STRING" id="194439.CT2288"/>
<dbReference type="DNASU" id="1007271"/>
<dbReference type="EnsemblBacteria" id="AAM73500">
    <property type="protein sequence ID" value="AAM73500"/>
    <property type="gene ID" value="CT2288"/>
</dbReference>
<dbReference type="KEGG" id="cte:CT2288"/>
<dbReference type="PATRIC" id="fig|194439.7.peg.2083"/>
<dbReference type="eggNOG" id="COG1195">
    <property type="taxonomic scope" value="Bacteria"/>
</dbReference>
<dbReference type="HOGENOM" id="CLU_040267_0_1_10"/>
<dbReference type="OrthoDB" id="9803889at2"/>
<dbReference type="Proteomes" id="UP000001007">
    <property type="component" value="Chromosome"/>
</dbReference>
<dbReference type="GO" id="GO:0005737">
    <property type="term" value="C:cytoplasm"/>
    <property type="evidence" value="ECO:0007669"/>
    <property type="project" value="UniProtKB-SubCell"/>
</dbReference>
<dbReference type="GO" id="GO:0005524">
    <property type="term" value="F:ATP binding"/>
    <property type="evidence" value="ECO:0007669"/>
    <property type="project" value="UniProtKB-UniRule"/>
</dbReference>
<dbReference type="GO" id="GO:0016887">
    <property type="term" value="F:ATP hydrolysis activity"/>
    <property type="evidence" value="ECO:0007669"/>
    <property type="project" value="InterPro"/>
</dbReference>
<dbReference type="GO" id="GO:0003697">
    <property type="term" value="F:single-stranded DNA binding"/>
    <property type="evidence" value="ECO:0007669"/>
    <property type="project" value="UniProtKB-UniRule"/>
</dbReference>
<dbReference type="GO" id="GO:0006260">
    <property type="term" value="P:DNA replication"/>
    <property type="evidence" value="ECO:0007669"/>
    <property type="project" value="UniProtKB-UniRule"/>
</dbReference>
<dbReference type="GO" id="GO:0000731">
    <property type="term" value="P:DNA synthesis involved in DNA repair"/>
    <property type="evidence" value="ECO:0007669"/>
    <property type="project" value="TreeGrafter"/>
</dbReference>
<dbReference type="GO" id="GO:0006302">
    <property type="term" value="P:double-strand break repair"/>
    <property type="evidence" value="ECO:0007669"/>
    <property type="project" value="InterPro"/>
</dbReference>
<dbReference type="GO" id="GO:0009432">
    <property type="term" value="P:SOS response"/>
    <property type="evidence" value="ECO:0007669"/>
    <property type="project" value="UniProtKB-UniRule"/>
</dbReference>
<dbReference type="Gene3D" id="3.40.50.300">
    <property type="entry name" value="P-loop containing nucleotide triphosphate hydrolases"/>
    <property type="match status" value="1"/>
</dbReference>
<dbReference type="Gene3D" id="1.20.1050.90">
    <property type="entry name" value="RecF/RecN/SMC, N-terminal domain"/>
    <property type="match status" value="1"/>
</dbReference>
<dbReference type="HAMAP" id="MF_00365">
    <property type="entry name" value="RecF"/>
    <property type="match status" value="1"/>
</dbReference>
<dbReference type="InterPro" id="IPR001238">
    <property type="entry name" value="DNA-binding_RecF"/>
</dbReference>
<dbReference type="InterPro" id="IPR018078">
    <property type="entry name" value="DNA-binding_RecF_CS"/>
</dbReference>
<dbReference type="InterPro" id="IPR027417">
    <property type="entry name" value="P-loop_NTPase"/>
</dbReference>
<dbReference type="InterPro" id="IPR038729">
    <property type="entry name" value="Rad50/SbcC_AAA"/>
</dbReference>
<dbReference type="InterPro" id="IPR042174">
    <property type="entry name" value="RecF_2"/>
</dbReference>
<dbReference type="NCBIfam" id="TIGR00611">
    <property type="entry name" value="recf"/>
    <property type="match status" value="1"/>
</dbReference>
<dbReference type="PANTHER" id="PTHR32182">
    <property type="entry name" value="DNA REPLICATION AND REPAIR PROTEIN RECF"/>
    <property type="match status" value="1"/>
</dbReference>
<dbReference type="PANTHER" id="PTHR32182:SF0">
    <property type="entry name" value="DNA REPLICATION AND REPAIR PROTEIN RECF"/>
    <property type="match status" value="1"/>
</dbReference>
<dbReference type="Pfam" id="PF13476">
    <property type="entry name" value="AAA_23"/>
    <property type="match status" value="1"/>
</dbReference>
<dbReference type="SUPFAM" id="SSF52540">
    <property type="entry name" value="P-loop containing nucleoside triphosphate hydrolases"/>
    <property type="match status" value="1"/>
</dbReference>
<dbReference type="PROSITE" id="PS00617">
    <property type="entry name" value="RECF_1"/>
    <property type="match status" value="1"/>
</dbReference>
<comment type="function">
    <text evidence="1">The RecF protein is involved in DNA metabolism; it is required for DNA replication and normal SOS inducibility. RecF binds preferentially to single-stranded, linear DNA. It also seems to bind ATP.</text>
</comment>
<comment type="subcellular location">
    <subcellularLocation>
        <location evidence="1">Cytoplasm</location>
    </subcellularLocation>
</comment>
<comment type="similarity">
    <text evidence="1">Belongs to the RecF family.</text>
</comment>
<keyword id="KW-0067">ATP-binding</keyword>
<keyword id="KW-0963">Cytoplasm</keyword>
<keyword id="KW-0227">DNA damage</keyword>
<keyword id="KW-0234">DNA repair</keyword>
<keyword id="KW-0235">DNA replication</keyword>
<keyword id="KW-0238">DNA-binding</keyword>
<keyword id="KW-0547">Nucleotide-binding</keyword>
<keyword id="KW-1185">Reference proteome</keyword>
<keyword id="KW-0742">SOS response</keyword>
<protein>
    <recommendedName>
        <fullName evidence="1">DNA replication and repair protein RecF</fullName>
    </recommendedName>
</protein>
<organism>
    <name type="scientific">Chlorobaculum tepidum (strain ATCC 49652 / DSM 12025 / NBRC 103806 / TLS)</name>
    <name type="common">Chlorobium tepidum</name>
    <dbReference type="NCBI Taxonomy" id="194439"/>
    <lineage>
        <taxon>Bacteria</taxon>
        <taxon>Pseudomonadati</taxon>
        <taxon>Chlorobiota</taxon>
        <taxon>Chlorobiia</taxon>
        <taxon>Chlorobiales</taxon>
        <taxon>Chlorobiaceae</taxon>
        <taxon>Chlorobaculum</taxon>
    </lineage>
</organism>
<feature type="chain" id="PRO_1000205476" description="DNA replication and repair protein RecF">
    <location>
        <begin position="1"/>
        <end position="368"/>
    </location>
</feature>
<feature type="binding site" evidence="1">
    <location>
        <begin position="30"/>
        <end position="37"/>
    </location>
    <ligand>
        <name>ATP</name>
        <dbReference type="ChEBI" id="CHEBI:30616"/>
    </ligand>
</feature>
<evidence type="ECO:0000255" key="1">
    <source>
        <dbReference type="HAMAP-Rule" id="MF_00365"/>
    </source>
</evidence>
<accession>Q8KA81</accession>
<reference key="1">
    <citation type="journal article" date="2002" name="Proc. Natl. Acad. Sci. U.S.A.">
        <title>The complete genome sequence of Chlorobium tepidum TLS, a photosynthetic, anaerobic, green-sulfur bacterium.</title>
        <authorList>
            <person name="Eisen J.A."/>
            <person name="Nelson K.E."/>
            <person name="Paulsen I.T."/>
            <person name="Heidelberg J.F."/>
            <person name="Wu M."/>
            <person name="Dodson R.J."/>
            <person name="DeBoy R.T."/>
            <person name="Gwinn M.L."/>
            <person name="Nelson W.C."/>
            <person name="Haft D.H."/>
            <person name="Hickey E.K."/>
            <person name="Peterson J.D."/>
            <person name="Durkin A.S."/>
            <person name="Kolonay J.F."/>
            <person name="Yang F."/>
            <person name="Holt I.E."/>
            <person name="Umayam L.A."/>
            <person name="Mason T.M."/>
            <person name="Brenner M."/>
            <person name="Shea T.P."/>
            <person name="Parksey D.S."/>
            <person name="Nierman W.C."/>
            <person name="Feldblyum T.V."/>
            <person name="Hansen C.L."/>
            <person name="Craven M.B."/>
            <person name="Radune D."/>
            <person name="Vamathevan J.J."/>
            <person name="Khouri H.M."/>
            <person name="White O."/>
            <person name="Gruber T.M."/>
            <person name="Ketchum K.A."/>
            <person name="Venter J.C."/>
            <person name="Tettelin H."/>
            <person name="Bryant D.A."/>
            <person name="Fraser C.M."/>
        </authorList>
    </citation>
    <scope>NUCLEOTIDE SEQUENCE [LARGE SCALE GENOMIC DNA]</scope>
    <source>
        <strain>ATCC 49652 / DSM 12025 / NBRC 103806 / TLS</strain>
    </source>
</reference>
<gene>
    <name evidence="1" type="primary">recF</name>
    <name type="ordered locus">CT2288</name>
</gene>